<sequence>MNLGFLVGVFGVLILSHAAYSTIQYRGLLKIMEEEFSRPPINVILELIIGLALCMWAALTFPGKFLSIHPDSDENRAVFLPDNSDFMIFNHRGRLFPPQIDMKF</sequence>
<evidence type="ECO:0000250" key="1">
    <source>
        <dbReference type="UniProtKB" id="Q8K273"/>
    </source>
</evidence>
<evidence type="ECO:0000250" key="2">
    <source>
        <dbReference type="UniProtKB" id="Q8N4V1"/>
    </source>
</evidence>
<evidence type="ECO:0000255" key="3"/>
<evidence type="ECO:0000305" key="4"/>
<proteinExistence type="inferred from homology"/>
<gene>
    <name type="ordered locus">At5g03345</name>
    <name type="ORF">F12E4</name>
</gene>
<comment type="function">
    <text evidence="1">Mediates Mg(2+) transport.</text>
</comment>
<comment type="subunit">
    <text evidence="2">Component of the ER membrane protein complex (EMC).</text>
</comment>
<comment type="subcellular location">
    <subcellularLocation>
        <location evidence="2">Endoplasmic reticulum membrane</location>
        <topology evidence="3">Multi-pass membrane protein</topology>
    </subcellularLocation>
    <subcellularLocation>
        <location evidence="1">Golgi apparatus membrane</location>
        <topology evidence="3">Multi-pass membrane protein</topology>
    </subcellularLocation>
    <subcellularLocation>
        <location evidence="1">Early endosome membrane</location>
        <topology evidence="3">Multi-pass membrane protein</topology>
    </subcellularLocation>
</comment>
<comment type="alternative products">
    <event type="alternative splicing"/>
    <isoform>
        <id>Q2HIM5-1</id>
        <name>1</name>
        <sequence type="displayed"/>
    </isoform>
    <isoform>
        <id>Q2HIM5-2</id>
        <name>2</name>
        <sequence type="described" ref="VSP_042272"/>
    </isoform>
</comment>
<comment type="similarity">
    <text evidence="4">Belongs to the membrane magnesium transporter (TC 1.A.67) family.</text>
</comment>
<feature type="chain" id="PRO_0000415520" description="Membrane magnesium transporter">
    <location>
        <begin position="1"/>
        <end position="104"/>
    </location>
</feature>
<feature type="topological domain" description="Cytoplasmic" evidence="4">
    <location>
        <begin position="1"/>
        <end position="2"/>
    </location>
</feature>
<feature type="transmembrane region" description="Helical" evidence="3">
    <location>
        <begin position="3"/>
        <end position="23"/>
    </location>
</feature>
<feature type="topological domain" description="Lumenal" evidence="4">
    <location>
        <begin position="24"/>
        <end position="40"/>
    </location>
</feature>
<feature type="transmembrane region" description="Helical" evidence="3">
    <location>
        <begin position="41"/>
        <end position="61"/>
    </location>
</feature>
<feature type="topological domain" description="Cytoplasmic" evidence="4">
    <location>
        <begin position="62"/>
        <end position="104"/>
    </location>
</feature>
<feature type="splice variant" id="VSP_042272" description="In isoform 2." evidence="4">
    <original>YR</original>
    <variation>CI</variation>
    <location>
        <begin position="25"/>
        <end position="26"/>
    </location>
</feature>
<feature type="sequence conflict" description="In Ref. 4; AAM64270." evidence="4" ref="4">
    <original>F</original>
    <variation>S</variation>
    <location>
        <position position="79"/>
    </location>
</feature>
<reference key="1">
    <citation type="journal article" date="2000" name="Nature">
        <title>Sequence and analysis of chromosome 5 of the plant Arabidopsis thaliana.</title>
        <authorList>
            <person name="Tabata S."/>
            <person name="Kaneko T."/>
            <person name="Nakamura Y."/>
            <person name="Kotani H."/>
            <person name="Kato T."/>
            <person name="Asamizu E."/>
            <person name="Miyajima N."/>
            <person name="Sasamoto S."/>
            <person name="Kimura T."/>
            <person name="Hosouchi T."/>
            <person name="Kawashima K."/>
            <person name="Kohara M."/>
            <person name="Matsumoto M."/>
            <person name="Matsuno A."/>
            <person name="Muraki A."/>
            <person name="Nakayama S."/>
            <person name="Nakazaki N."/>
            <person name="Naruo K."/>
            <person name="Okumura S."/>
            <person name="Shinpo S."/>
            <person name="Takeuchi C."/>
            <person name="Wada T."/>
            <person name="Watanabe A."/>
            <person name="Yamada M."/>
            <person name="Yasuda M."/>
            <person name="Sato S."/>
            <person name="de la Bastide M."/>
            <person name="Huang E."/>
            <person name="Spiegel L."/>
            <person name="Gnoj L."/>
            <person name="O'Shaughnessy A."/>
            <person name="Preston R."/>
            <person name="Habermann K."/>
            <person name="Murray J."/>
            <person name="Johnson D."/>
            <person name="Rohlfing T."/>
            <person name="Nelson J."/>
            <person name="Stoneking T."/>
            <person name="Pepin K."/>
            <person name="Spieth J."/>
            <person name="Sekhon M."/>
            <person name="Armstrong J."/>
            <person name="Becker M."/>
            <person name="Belter E."/>
            <person name="Cordum H."/>
            <person name="Cordes M."/>
            <person name="Courtney L."/>
            <person name="Courtney W."/>
            <person name="Dante M."/>
            <person name="Du H."/>
            <person name="Edwards J."/>
            <person name="Fryman J."/>
            <person name="Haakensen B."/>
            <person name="Lamar E."/>
            <person name="Latreille P."/>
            <person name="Leonard S."/>
            <person name="Meyer R."/>
            <person name="Mulvaney E."/>
            <person name="Ozersky P."/>
            <person name="Riley A."/>
            <person name="Strowmatt C."/>
            <person name="Wagner-McPherson C."/>
            <person name="Wollam A."/>
            <person name="Yoakum M."/>
            <person name="Bell M."/>
            <person name="Dedhia N."/>
            <person name="Parnell L."/>
            <person name="Shah R."/>
            <person name="Rodriguez M."/>
            <person name="Hoon See L."/>
            <person name="Vil D."/>
            <person name="Baker J."/>
            <person name="Kirchoff K."/>
            <person name="Toth K."/>
            <person name="King L."/>
            <person name="Bahret A."/>
            <person name="Miller B."/>
            <person name="Marra M.A."/>
            <person name="Martienssen R."/>
            <person name="McCombie W.R."/>
            <person name="Wilson R.K."/>
            <person name="Murphy G."/>
            <person name="Bancroft I."/>
            <person name="Volckaert G."/>
            <person name="Wambutt R."/>
            <person name="Duesterhoeft A."/>
            <person name="Stiekema W."/>
            <person name="Pohl T."/>
            <person name="Entian K.-D."/>
            <person name="Terryn N."/>
            <person name="Hartley N."/>
            <person name="Bent E."/>
            <person name="Johnson S."/>
            <person name="Langham S.-A."/>
            <person name="McCullagh B."/>
            <person name="Robben J."/>
            <person name="Grymonprez B."/>
            <person name="Zimmermann W."/>
            <person name="Ramsperger U."/>
            <person name="Wedler H."/>
            <person name="Balke K."/>
            <person name="Wedler E."/>
            <person name="Peters S."/>
            <person name="van Staveren M."/>
            <person name="Dirkse W."/>
            <person name="Mooijman P."/>
            <person name="Klein Lankhorst R."/>
            <person name="Weitzenegger T."/>
            <person name="Bothe G."/>
            <person name="Rose M."/>
            <person name="Hauf J."/>
            <person name="Berneiser S."/>
            <person name="Hempel S."/>
            <person name="Feldpausch M."/>
            <person name="Lamberth S."/>
            <person name="Villarroel R."/>
            <person name="Gielen J."/>
            <person name="Ardiles W."/>
            <person name="Bents O."/>
            <person name="Lemcke K."/>
            <person name="Kolesov G."/>
            <person name="Mayer K.F.X."/>
            <person name="Rudd S."/>
            <person name="Schoof H."/>
            <person name="Schueller C."/>
            <person name="Zaccaria P."/>
            <person name="Mewes H.-W."/>
            <person name="Bevan M."/>
            <person name="Fransz P.F."/>
        </authorList>
    </citation>
    <scope>NUCLEOTIDE SEQUENCE [LARGE SCALE GENOMIC DNA]</scope>
    <source>
        <strain>cv. Columbia</strain>
    </source>
</reference>
<reference key="2">
    <citation type="journal article" date="2017" name="Plant J.">
        <title>Araport11: a complete reannotation of the Arabidopsis thaliana reference genome.</title>
        <authorList>
            <person name="Cheng C.Y."/>
            <person name="Krishnakumar V."/>
            <person name="Chan A.P."/>
            <person name="Thibaud-Nissen F."/>
            <person name="Schobel S."/>
            <person name="Town C.D."/>
        </authorList>
    </citation>
    <scope>GENOME REANNOTATION</scope>
    <source>
        <strain>cv. Columbia</strain>
    </source>
</reference>
<reference key="3">
    <citation type="submission" date="2006-02" db="EMBL/GenBank/DDBJ databases">
        <title>Arabidopsis ORF clones.</title>
        <authorList>
            <person name="Shinn P."/>
            <person name="Chen H."/>
            <person name="Kim C.J."/>
            <person name="Ecker J.R."/>
        </authorList>
    </citation>
    <scope>NUCLEOTIDE SEQUENCE [LARGE SCALE MRNA] (ISOFORM 1)</scope>
    <source>
        <strain>cv. Columbia</strain>
    </source>
</reference>
<reference key="4">
    <citation type="submission" date="2002-03" db="EMBL/GenBank/DDBJ databases">
        <title>Full-length cDNA from Arabidopsis thaliana.</title>
        <authorList>
            <person name="Brover V.V."/>
            <person name="Troukhan M.E."/>
            <person name="Alexandrov N.A."/>
            <person name="Lu Y.-P."/>
            <person name="Flavell R.B."/>
            <person name="Feldmann K.A."/>
        </authorList>
    </citation>
    <scope>NUCLEOTIDE SEQUENCE [LARGE SCALE MRNA] (ISOFORM 1)</scope>
</reference>
<name>MMGT_ARATH</name>
<keyword id="KW-0025">Alternative splicing</keyword>
<keyword id="KW-0256">Endoplasmic reticulum</keyword>
<keyword id="KW-0967">Endosome</keyword>
<keyword id="KW-0333">Golgi apparatus</keyword>
<keyword id="KW-0472">Membrane</keyword>
<keyword id="KW-1185">Reference proteome</keyword>
<keyword id="KW-0812">Transmembrane</keyword>
<keyword id="KW-1133">Transmembrane helix</keyword>
<protein>
    <recommendedName>
        <fullName>Membrane magnesium transporter</fullName>
    </recommendedName>
    <alternativeName>
        <fullName>ER membrane protein complex subunit 5 homolog</fullName>
    </alternativeName>
</protein>
<organism>
    <name type="scientific">Arabidopsis thaliana</name>
    <name type="common">Mouse-ear cress</name>
    <dbReference type="NCBI Taxonomy" id="3702"/>
    <lineage>
        <taxon>Eukaryota</taxon>
        <taxon>Viridiplantae</taxon>
        <taxon>Streptophyta</taxon>
        <taxon>Embryophyta</taxon>
        <taxon>Tracheophyta</taxon>
        <taxon>Spermatophyta</taxon>
        <taxon>Magnoliopsida</taxon>
        <taxon>eudicotyledons</taxon>
        <taxon>Gunneridae</taxon>
        <taxon>Pentapetalae</taxon>
        <taxon>rosids</taxon>
        <taxon>malvids</taxon>
        <taxon>Brassicales</taxon>
        <taxon>Brassicaceae</taxon>
        <taxon>Camelineae</taxon>
        <taxon>Arabidopsis</taxon>
    </lineage>
</organism>
<dbReference type="EMBL" id="AL162751">
    <property type="status" value="NOT_ANNOTATED_CDS"/>
    <property type="molecule type" value="Genomic_DNA"/>
</dbReference>
<dbReference type="EMBL" id="CP002688">
    <property type="protein sequence ID" value="AED90588.1"/>
    <property type="molecule type" value="Genomic_DNA"/>
</dbReference>
<dbReference type="EMBL" id="BT024556">
    <property type="protein sequence ID" value="ABD38895.1"/>
    <property type="molecule type" value="mRNA"/>
</dbReference>
<dbReference type="EMBL" id="AY086191">
    <property type="protein sequence ID" value="AAM64270.1"/>
    <property type="molecule type" value="mRNA"/>
</dbReference>
<dbReference type="RefSeq" id="NP_568115.1">
    <molecule id="Q2HIM5-1"/>
    <property type="nucleotide sequence ID" value="NM_120413.4"/>
</dbReference>
<dbReference type="SMR" id="Q2HIM5"/>
<dbReference type="BioGRID" id="17143">
    <property type="interactions" value="91"/>
</dbReference>
<dbReference type="FunCoup" id="Q2HIM5">
    <property type="interactions" value="2941"/>
</dbReference>
<dbReference type="IntAct" id="Q2HIM5">
    <property type="interactions" value="91"/>
</dbReference>
<dbReference type="STRING" id="3702.Q2HIM5"/>
<dbReference type="PaxDb" id="3702-AT5G03345.1"/>
<dbReference type="ProteomicsDB" id="238322">
    <molecule id="Q2HIM5-1"/>
</dbReference>
<dbReference type="EnsemblPlants" id="AT5G03345.1">
    <molecule id="Q2HIM5-1"/>
    <property type="protein sequence ID" value="AT5G03345.1"/>
    <property type="gene ID" value="AT5G03345"/>
</dbReference>
<dbReference type="GeneID" id="831867"/>
<dbReference type="Gramene" id="AT5G03345.1">
    <molecule id="Q2HIM5-1"/>
    <property type="protein sequence ID" value="AT5G03345.1"/>
    <property type="gene ID" value="AT5G03345"/>
</dbReference>
<dbReference type="KEGG" id="ath:AT5G03345"/>
<dbReference type="Araport" id="AT5G03345"/>
<dbReference type="TAIR" id="AT5G03345">
    <property type="gene designation" value="PRCE2"/>
</dbReference>
<dbReference type="eggNOG" id="ENOG502S1Q8">
    <property type="taxonomic scope" value="Eukaryota"/>
</dbReference>
<dbReference type="HOGENOM" id="CLU_122437_4_0_1"/>
<dbReference type="InParanoid" id="Q2HIM5"/>
<dbReference type="OMA" id="YGVMYIA"/>
<dbReference type="PhylomeDB" id="Q2HIM5"/>
<dbReference type="PRO" id="PR:Q2HIM5"/>
<dbReference type="Proteomes" id="UP000006548">
    <property type="component" value="Chromosome 5"/>
</dbReference>
<dbReference type="ExpressionAtlas" id="Q2HIM5">
    <property type="expression patterns" value="baseline and differential"/>
</dbReference>
<dbReference type="GO" id="GO:0031901">
    <property type="term" value="C:early endosome membrane"/>
    <property type="evidence" value="ECO:0007669"/>
    <property type="project" value="UniProtKB-SubCell"/>
</dbReference>
<dbReference type="GO" id="GO:0005783">
    <property type="term" value="C:endoplasmic reticulum"/>
    <property type="evidence" value="ECO:0007005"/>
    <property type="project" value="TAIR"/>
</dbReference>
<dbReference type="GO" id="GO:0005789">
    <property type="term" value="C:endoplasmic reticulum membrane"/>
    <property type="evidence" value="ECO:0007669"/>
    <property type="project" value="UniProtKB-SubCell"/>
</dbReference>
<dbReference type="GO" id="GO:0000139">
    <property type="term" value="C:Golgi membrane"/>
    <property type="evidence" value="ECO:0007669"/>
    <property type="project" value="UniProtKB-SubCell"/>
</dbReference>
<dbReference type="InterPro" id="IPR018937">
    <property type="entry name" value="MMgT"/>
</dbReference>
<dbReference type="PANTHER" id="PTHR21181">
    <property type="match status" value="1"/>
</dbReference>
<dbReference type="PANTHER" id="PTHR21181:SF7">
    <property type="entry name" value="ER MEMBRANE PROTEIN COMPLEX SUBUNIT 5"/>
    <property type="match status" value="1"/>
</dbReference>
<dbReference type="Pfam" id="PF10270">
    <property type="entry name" value="MMgT"/>
    <property type="match status" value="1"/>
</dbReference>
<accession>Q2HIM5</accession>
<accession>A8MRD2</accession>
<accession>Q8LD56</accession>